<comment type="function">
    <text evidence="1">Converts heme B (protoheme IX) to heme O by substitution of the vinyl group on carbon 2 of heme B porphyrin ring with a hydroxyethyl farnesyl side group.</text>
</comment>
<comment type="catalytic activity">
    <reaction evidence="1">
        <text>heme b + (2E,6E)-farnesyl diphosphate + H2O = Fe(II)-heme o + diphosphate</text>
        <dbReference type="Rhea" id="RHEA:28070"/>
        <dbReference type="ChEBI" id="CHEBI:15377"/>
        <dbReference type="ChEBI" id="CHEBI:33019"/>
        <dbReference type="ChEBI" id="CHEBI:60344"/>
        <dbReference type="ChEBI" id="CHEBI:60530"/>
        <dbReference type="ChEBI" id="CHEBI:175763"/>
        <dbReference type="EC" id="2.5.1.141"/>
    </reaction>
</comment>
<comment type="pathway">
    <text evidence="1">Porphyrin-containing compound metabolism; heme O biosynthesis; heme O from protoheme: step 1/1.</text>
</comment>
<comment type="subcellular location">
    <subcellularLocation>
        <location evidence="1">Cell inner membrane</location>
        <topology evidence="1">Multi-pass membrane protein</topology>
    </subcellularLocation>
</comment>
<comment type="miscellaneous">
    <text evidence="1">Carbon 2 of the heme B porphyrin ring is defined according to the Fischer nomenclature.</text>
</comment>
<comment type="similarity">
    <text evidence="1">Belongs to the UbiA prenyltransferase family. Protoheme IX farnesyltransferase subfamily.</text>
</comment>
<reference key="1">
    <citation type="journal article" date="1998" name="Nature">
        <title>The complete genome of the hyperthermophilic bacterium Aquifex aeolicus.</title>
        <authorList>
            <person name="Deckert G."/>
            <person name="Warren P.V."/>
            <person name="Gaasterland T."/>
            <person name="Young W.G."/>
            <person name="Lenox A.L."/>
            <person name="Graham D.E."/>
            <person name="Overbeek R."/>
            <person name="Snead M.A."/>
            <person name="Keller M."/>
            <person name="Aujay M."/>
            <person name="Huber R."/>
            <person name="Feldman R.A."/>
            <person name="Short J.M."/>
            <person name="Olsen G.J."/>
            <person name="Swanson R.V."/>
        </authorList>
    </citation>
    <scope>NUCLEOTIDE SEQUENCE [LARGE SCALE GENOMIC DNA]</scope>
    <source>
        <strain>VF5</strain>
    </source>
</reference>
<name>COXX_AQUAE</name>
<protein>
    <recommendedName>
        <fullName evidence="1">Protoheme IX farnesyltransferase</fullName>
        <ecNumber evidence="1">2.5.1.141</ecNumber>
    </recommendedName>
    <alternativeName>
        <fullName evidence="1">Heme B farnesyltransferase</fullName>
    </alternativeName>
    <alternativeName>
        <fullName evidence="1">Heme O synthase</fullName>
    </alternativeName>
</protein>
<keyword id="KW-0997">Cell inner membrane</keyword>
<keyword id="KW-1003">Cell membrane</keyword>
<keyword id="KW-0350">Heme biosynthesis</keyword>
<keyword id="KW-0472">Membrane</keyword>
<keyword id="KW-1185">Reference proteome</keyword>
<keyword id="KW-0808">Transferase</keyword>
<keyword id="KW-0812">Transmembrane</keyword>
<keyword id="KW-1133">Transmembrane helix</keyword>
<accession>O66544</accession>
<dbReference type="EC" id="2.5.1.141" evidence="1"/>
<dbReference type="EMBL" id="AE000657">
    <property type="protein sequence ID" value="AAC06505.1"/>
    <property type="molecule type" value="Genomic_DNA"/>
</dbReference>
<dbReference type="PIR" id="E70314">
    <property type="entry name" value="E70314"/>
</dbReference>
<dbReference type="RefSeq" id="NP_213104.1">
    <property type="nucleotide sequence ID" value="NC_000918.1"/>
</dbReference>
<dbReference type="RefSeq" id="WP_010880042.1">
    <property type="nucleotide sequence ID" value="NC_000918.1"/>
</dbReference>
<dbReference type="SMR" id="O66544"/>
<dbReference type="FunCoup" id="O66544">
    <property type="interactions" value="331"/>
</dbReference>
<dbReference type="STRING" id="224324.aq_154"/>
<dbReference type="EnsemblBacteria" id="AAC06505">
    <property type="protein sequence ID" value="AAC06505"/>
    <property type="gene ID" value="aq_154"/>
</dbReference>
<dbReference type="KEGG" id="aae:aq_154"/>
<dbReference type="PATRIC" id="fig|224324.8.peg.130"/>
<dbReference type="eggNOG" id="COG0109">
    <property type="taxonomic scope" value="Bacteria"/>
</dbReference>
<dbReference type="HOGENOM" id="CLU_029631_0_2_0"/>
<dbReference type="InParanoid" id="O66544"/>
<dbReference type="OrthoDB" id="9814417at2"/>
<dbReference type="UniPathway" id="UPA00834">
    <property type="reaction ID" value="UER00712"/>
</dbReference>
<dbReference type="Proteomes" id="UP000000798">
    <property type="component" value="Chromosome"/>
</dbReference>
<dbReference type="GO" id="GO:0005886">
    <property type="term" value="C:plasma membrane"/>
    <property type="evidence" value="ECO:0007669"/>
    <property type="project" value="UniProtKB-SubCell"/>
</dbReference>
<dbReference type="GO" id="GO:0008495">
    <property type="term" value="F:protoheme IX farnesyltransferase activity"/>
    <property type="evidence" value="ECO:0000318"/>
    <property type="project" value="GO_Central"/>
</dbReference>
<dbReference type="GO" id="GO:0006783">
    <property type="term" value="P:heme biosynthetic process"/>
    <property type="evidence" value="ECO:0000318"/>
    <property type="project" value="GO_Central"/>
</dbReference>
<dbReference type="GO" id="GO:0048034">
    <property type="term" value="P:heme O biosynthetic process"/>
    <property type="evidence" value="ECO:0007669"/>
    <property type="project" value="UniProtKB-UniRule"/>
</dbReference>
<dbReference type="CDD" id="cd13957">
    <property type="entry name" value="PT_UbiA_Cox10"/>
    <property type="match status" value="1"/>
</dbReference>
<dbReference type="FunFam" id="1.10.357.140:FF:000001">
    <property type="entry name" value="Protoheme IX farnesyltransferase"/>
    <property type="match status" value="1"/>
</dbReference>
<dbReference type="Gene3D" id="1.10.357.140">
    <property type="entry name" value="UbiA prenyltransferase"/>
    <property type="match status" value="1"/>
</dbReference>
<dbReference type="HAMAP" id="MF_00154">
    <property type="entry name" value="CyoE_CtaB"/>
    <property type="match status" value="1"/>
</dbReference>
<dbReference type="InterPro" id="IPR006369">
    <property type="entry name" value="Protohaem_IX_farnesylTrfase"/>
</dbReference>
<dbReference type="InterPro" id="IPR000537">
    <property type="entry name" value="UbiA_prenyltransferase"/>
</dbReference>
<dbReference type="InterPro" id="IPR030470">
    <property type="entry name" value="UbiA_prenylTrfase_CS"/>
</dbReference>
<dbReference type="InterPro" id="IPR044878">
    <property type="entry name" value="UbiA_sf"/>
</dbReference>
<dbReference type="NCBIfam" id="TIGR01473">
    <property type="entry name" value="cyoE_ctaB"/>
    <property type="match status" value="1"/>
</dbReference>
<dbReference type="NCBIfam" id="NF003349">
    <property type="entry name" value="PRK04375.1-2"/>
    <property type="match status" value="1"/>
</dbReference>
<dbReference type="PANTHER" id="PTHR43448:SF7">
    <property type="entry name" value="4-HYDROXYBENZOATE SOLANESYLTRANSFERASE"/>
    <property type="match status" value="1"/>
</dbReference>
<dbReference type="PANTHER" id="PTHR43448">
    <property type="entry name" value="PROTOHEME IX FARNESYLTRANSFERASE, MITOCHONDRIAL"/>
    <property type="match status" value="1"/>
</dbReference>
<dbReference type="Pfam" id="PF01040">
    <property type="entry name" value="UbiA"/>
    <property type="match status" value="1"/>
</dbReference>
<dbReference type="PROSITE" id="PS00943">
    <property type="entry name" value="UBIA"/>
    <property type="match status" value="1"/>
</dbReference>
<organism>
    <name type="scientific">Aquifex aeolicus (strain VF5)</name>
    <dbReference type="NCBI Taxonomy" id="224324"/>
    <lineage>
        <taxon>Bacteria</taxon>
        <taxon>Pseudomonadati</taxon>
        <taxon>Aquificota</taxon>
        <taxon>Aquificia</taxon>
        <taxon>Aquificales</taxon>
        <taxon>Aquificaceae</taxon>
        <taxon>Aquifex</taxon>
    </lineage>
</organism>
<feature type="chain" id="PRO_0000162902" description="Protoheme IX farnesyltransferase">
    <location>
        <begin position="1"/>
        <end position="292"/>
    </location>
</feature>
<feature type="transmembrane region" description="Helical" evidence="1">
    <location>
        <begin position="15"/>
        <end position="35"/>
    </location>
</feature>
<feature type="transmembrane region" description="Helical" evidence="1">
    <location>
        <begin position="49"/>
        <end position="69"/>
    </location>
</feature>
<feature type="transmembrane region" description="Helical" evidence="1">
    <location>
        <begin position="104"/>
        <end position="124"/>
    </location>
</feature>
<feature type="transmembrane region" description="Helical" evidence="1">
    <location>
        <begin position="147"/>
        <end position="167"/>
    </location>
</feature>
<feature type="transmembrane region" description="Helical" evidence="1">
    <location>
        <begin position="171"/>
        <end position="191"/>
    </location>
</feature>
<feature type="transmembrane region" description="Helical" evidence="1">
    <location>
        <begin position="218"/>
        <end position="238"/>
    </location>
</feature>
<feature type="transmembrane region" description="Helical" evidence="1">
    <location>
        <begin position="242"/>
        <end position="262"/>
    </location>
</feature>
<feature type="transmembrane region" description="Helical" evidence="1">
    <location>
        <begin position="271"/>
        <end position="291"/>
    </location>
</feature>
<gene>
    <name evidence="1" type="primary">ctaB</name>
    <name type="ordered locus">aq_154</name>
</gene>
<proteinExistence type="inferred from homology"/>
<evidence type="ECO:0000255" key="1">
    <source>
        <dbReference type="HAMAP-Rule" id="MF_00154"/>
    </source>
</evidence>
<sequence>MSERVEAGQNVIKEYLVLTKPGIVSLVLITTLGGMYLGSRGELQPELVFWTLLGTGLAAAGSAVLNMVIDKDIDKLMVRTSERPLPKGTVDPTKAFIFGITLQVFSLVIMLTFVGVLPALLVALASFSYVILYSLLLKRKSPVATEIGGISGALPPVIGYVAASGSVDINAIALFLLMFMWQPPHFWVLALKYADDYKRAGIPTLPVARGVFITKLKTLLYTASLFPVSLIPYLTGLVENLYFVVAVVMNLIYLGLTLKFFFSKKEESMKLFFFSIIYLAVLFGTMIVDMVK</sequence>